<feature type="chain" id="PRO_0000152153" description="Leucine--tRNA ligase, cytoplasmic">
    <location>
        <begin position="1"/>
        <end position="1123"/>
    </location>
</feature>
<feature type="short sequence motif" description="'HIGH' region">
    <location>
        <begin position="84"/>
        <end position="94"/>
    </location>
</feature>
<feature type="short sequence motif" description="'KMSKS' region">
    <location>
        <begin position="757"/>
        <end position="761"/>
    </location>
</feature>
<feature type="binding site" evidence="1">
    <location>
        <position position="760"/>
    </location>
    <ligand>
        <name>ATP</name>
        <dbReference type="ChEBI" id="CHEBI:30616"/>
    </ligand>
</feature>
<sequence>MADTAAVAKGVENLSVSASKTKELKGTEKRDTLIEIEKRYQQKWEQEGVFEVDAPSTAEFPLDAITPDELRQKHPKFFGTIAYPYMNGRLHAGHAFSFSKIEYHTGFARMQGKRALFPQGYHCTGLPIKASADKLVKEIEMFGQEFERYKEDEVVEGAAPAAAAAPKTKEDLTKFNAKKGKTVAKTGGAKYQFQILKSLGIPVSEIHKFADPQYWLHYFPPECKKDLTNFGARIDWRRQFVTTDANPYYDAFVRWQMNRLLELNKIKFGKRYTIYSIKDGQPCMDHDRSEGEGVLPQEYTALKLKVTEWAPKAAEALKGKLPEGANVYLCPATLRPETMYGQVCCFVGPALKYGVFKAAENEYFVITERAAKNMAYQGIFEKEGVIEKAADIVGSDLIGTLVNAPLSVHKEVYVLPMDTVLATKGTGVVTSVPSDSPDDCAMMTELAKKPEFYGIQKEWAEKEIVSVIKTPTSDLLAPYLVKKLKINSPKDAKQLLEAKELAYKEGFYQGIMNYGDFKGEKVETAKPKVRQQLIDAGDAFAYSEPENKVVSRSGDECSVALMDQWYIDYGEDSWRTVLYDYVENKDGKGINTYYADTQHAFKGVIGWLKQWACARTYGLGSKLPWDPNFLVESLSDSTVYMAYYTVAHWLHRDLFGREKGKGNIGADQMIDEVWDYIFCRTELSDHLVTKSGIPKETLDSMRREFQYFYPLDIRVSGKDLIPNHLTFWLYNHIALFPREYWPKSVRANGHLQLNGEKMSKSTGNFMTLDDVVKKYGADAARVALADAGDGISDSNFVEDVADNTILRFYTNKEWIEETLKDESLRTGELNSFQDALFDNEMNALVNEARKHYEETSYKLALKAAHYDFLNARDMYREACAAAGIPLHKDLVTKYIRLQALVITPIAPHWADYVWQECLGEPKSIQFARWPEVPAANPALTAARDYVRTTSSAINSAEAAQLKKMAKGRQSDFDPKKPKKLTIFATENFPTWQAKYIDLLSEVWDAATGTQKIDDKELNGRIAKMGEMKKAMPFVQALKKRLKDGEPAEQILSRKLSFDEKATLLAMIPGLKRTAGLESVQVVLVEEGSKTGKDLTNGGAEIEVTAPMAEAALPGQPSFFFTNV</sequence>
<keyword id="KW-0030">Aminoacyl-tRNA synthetase</keyword>
<keyword id="KW-0067">ATP-binding</keyword>
<keyword id="KW-0963">Cytoplasm</keyword>
<keyword id="KW-0436">Ligase</keyword>
<keyword id="KW-0547">Nucleotide-binding</keyword>
<keyword id="KW-0648">Protein biosynthesis</keyword>
<keyword id="KW-1185">Reference proteome</keyword>
<gene>
    <name type="primary">leu-6</name>
    <name type="ORF">B10K17.030</name>
    <name type="ORF">NCU09463</name>
</gene>
<evidence type="ECO:0000250" key="1"/>
<evidence type="ECO:0000305" key="2"/>
<protein>
    <recommendedName>
        <fullName>Leucine--tRNA ligase, cytoplasmic</fullName>
        <ecNumber>6.1.1.4</ecNumber>
    </recommendedName>
    <alternativeName>
        <fullName>Leucyl-tRNA synthetase</fullName>
        <shortName>LeuRS</shortName>
    </alternativeName>
</protein>
<organism>
    <name type="scientific">Neurospora crassa (strain ATCC 24698 / 74-OR23-1A / CBS 708.71 / DSM 1257 / FGSC 987)</name>
    <dbReference type="NCBI Taxonomy" id="367110"/>
    <lineage>
        <taxon>Eukaryota</taxon>
        <taxon>Fungi</taxon>
        <taxon>Dikarya</taxon>
        <taxon>Ascomycota</taxon>
        <taxon>Pezizomycotina</taxon>
        <taxon>Sordariomycetes</taxon>
        <taxon>Sordariomycetidae</taxon>
        <taxon>Sordariales</taxon>
        <taxon>Sordariaceae</taxon>
        <taxon>Neurospora</taxon>
    </lineage>
</organism>
<proteinExistence type="inferred from homology"/>
<comment type="catalytic activity">
    <reaction>
        <text>tRNA(Leu) + L-leucine + ATP = L-leucyl-tRNA(Leu) + AMP + diphosphate</text>
        <dbReference type="Rhea" id="RHEA:11688"/>
        <dbReference type="Rhea" id="RHEA-COMP:9613"/>
        <dbReference type="Rhea" id="RHEA-COMP:9622"/>
        <dbReference type="ChEBI" id="CHEBI:30616"/>
        <dbReference type="ChEBI" id="CHEBI:33019"/>
        <dbReference type="ChEBI" id="CHEBI:57427"/>
        <dbReference type="ChEBI" id="CHEBI:78442"/>
        <dbReference type="ChEBI" id="CHEBI:78494"/>
        <dbReference type="ChEBI" id="CHEBI:456215"/>
        <dbReference type="EC" id="6.1.1.4"/>
    </reaction>
</comment>
<comment type="subcellular location">
    <subcellularLocation>
        <location>Cytoplasm</location>
    </subcellularLocation>
</comment>
<comment type="similarity">
    <text evidence="2">Belongs to the class-I aminoacyl-tRNA synthetase family.</text>
</comment>
<accession>P10857</accession>
<accession>Q7RVI3</accession>
<dbReference type="EC" id="6.1.1.4"/>
<dbReference type="EMBL" id="M30473">
    <property type="protein sequence ID" value="AAA33593.1"/>
    <property type="molecule type" value="Genomic_DNA"/>
</dbReference>
<dbReference type="EMBL" id="BX842596">
    <property type="protein sequence ID" value="CAE75711.1"/>
    <property type="molecule type" value="Genomic_DNA"/>
</dbReference>
<dbReference type="EMBL" id="CM002237">
    <property type="protein sequence ID" value="EAA33982.1"/>
    <property type="molecule type" value="Genomic_DNA"/>
</dbReference>
<dbReference type="EMBL" id="X13021">
    <property type="protein sequence ID" value="CAA31439.1"/>
    <property type="molecule type" value="Genomic_DNA"/>
</dbReference>
<dbReference type="PIR" id="A33475">
    <property type="entry name" value="SYNCLC"/>
</dbReference>
<dbReference type="RefSeq" id="XP_963218.1">
    <property type="nucleotide sequence ID" value="XM_958125.3"/>
</dbReference>
<dbReference type="SMR" id="P10857"/>
<dbReference type="FunCoup" id="P10857">
    <property type="interactions" value="1163"/>
</dbReference>
<dbReference type="STRING" id="367110.P10857"/>
<dbReference type="PaxDb" id="5141-EFNCRP00000009296"/>
<dbReference type="EnsemblFungi" id="EAA33982">
    <property type="protein sequence ID" value="EAA33982"/>
    <property type="gene ID" value="NCU09463"/>
</dbReference>
<dbReference type="GeneID" id="3879366"/>
<dbReference type="KEGG" id="ncr:NCU09463"/>
<dbReference type="VEuPathDB" id="FungiDB:NCU09463"/>
<dbReference type="HOGENOM" id="CLU_004174_1_1_1"/>
<dbReference type="InParanoid" id="P10857"/>
<dbReference type="OMA" id="KFIEWQF"/>
<dbReference type="OrthoDB" id="10249672at2759"/>
<dbReference type="Proteomes" id="UP000001805">
    <property type="component" value="Chromosome 6, Linkage Group II"/>
</dbReference>
<dbReference type="GO" id="GO:0005737">
    <property type="term" value="C:cytoplasm"/>
    <property type="evidence" value="ECO:0007669"/>
    <property type="project" value="UniProtKB-SubCell"/>
</dbReference>
<dbReference type="GO" id="GO:0002161">
    <property type="term" value="F:aminoacyl-tRNA deacylase activity"/>
    <property type="evidence" value="ECO:0007669"/>
    <property type="project" value="InterPro"/>
</dbReference>
<dbReference type="GO" id="GO:0005524">
    <property type="term" value="F:ATP binding"/>
    <property type="evidence" value="ECO:0007669"/>
    <property type="project" value="UniProtKB-KW"/>
</dbReference>
<dbReference type="GO" id="GO:0004823">
    <property type="term" value="F:leucine-tRNA ligase activity"/>
    <property type="evidence" value="ECO:0000318"/>
    <property type="project" value="GO_Central"/>
</dbReference>
<dbReference type="GO" id="GO:1990825">
    <property type="term" value="F:sequence-specific mRNA binding"/>
    <property type="evidence" value="ECO:0007669"/>
    <property type="project" value="EnsemblFungi"/>
</dbReference>
<dbReference type="GO" id="GO:0006429">
    <property type="term" value="P:leucyl-tRNA aminoacylation"/>
    <property type="evidence" value="ECO:0000318"/>
    <property type="project" value="GO_Central"/>
</dbReference>
<dbReference type="GO" id="GO:1903432">
    <property type="term" value="P:regulation of TORC1 signaling"/>
    <property type="evidence" value="ECO:0007669"/>
    <property type="project" value="EnsemblFungi"/>
</dbReference>
<dbReference type="FunFam" id="3.90.740.10:FF:000001">
    <property type="entry name" value="Leucine--tRNA ligase, cytoplasmic"/>
    <property type="match status" value="1"/>
</dbReference>
<dbReference type="Gene3D" id="3.40.50.620">
    <property type="entry name" value="HUPs"/>
    <property type="match status" value="1"/>
</dbReference>
<dbReference type="Gene3D" id="1.10.730.10">
    <property type="entry name" value="Isoleucyl-tRNA Synthetase, Domain 1"/>
    <property type="match status" value="1"/>
</dbReference>
<dbReference type="Gene3D" id="3.90.740.10">
    <property type="entry name" value="Valyl/Leucyl/Isoleucyl-tRNA synthetase, editing domain"/>
    <property type="match status" value="1"/>
</dbReference>
<dbReference type="InterPro" id="IPR002300">
    <property type="entry name" value="aa-tRNA-synth_Ia"/>
</dbReference>
<dbReference type="InterPro" id="IPR004493">
    <property type="entry name" value="Leu-tRNA-synth_Ia_arc/euk"/>
</dbReference>
<dbReference type="InterPro" id="IPR013155">
    <property type="entry name" value="M/V/L/I-tRNA-synth_anticd-bd"/>
</dbReference>
<dbReference type="InterPro" id="IPR055416">
    <property type="entry name" value="RBD_LARS1"/>
</dbReference>
<dbReference type="InterPro" id="IPR014729">
    <property type="entry name" value="Rossmann-like_a/b/a_fold"/>
</dbReference>
<dbReference type="InterPro" id="IPR009080">
    <property type="entry name" value="tRNAsynth_Ia_anticodon-bd"/>
</dbReference>
<dbReference type="InterPro" id="IPR009008">
    <property type="entry name" value="Val/Leu/Ile-tRNA-synth_edit"/>
</dbReference>
<dbReference type="NCBIfam" id="TIGR00395">
    <property type="entry name" value="leuS_arch"/>
    <property type="match status" value="1"/>
</dbReference>
<dbReference type="PANTHER" id="PTHR45794:SF1">
    <property type="entry name" value="LEUCINE--TRNA LIGASE, CYTOPLASMIC"/>
    <property type="match status" value="1"/>
</dbReference>
<dbReference type="PANTHER" id="PTHR45794">
    <property type="entry name" value="LEUCYL-TRNA SYNTHETASE"/>
    <property type="match status" value="1"/>
</dbReference>
<dbReference type="Pfam" id="PF08264">
    <property type="entry name" value="Anticodon_1"/>
    <property type="match status" value="1"/>
</dbReference>
<dbReference type="Pfam" id="PF24810">
    <property type="entry name" value="RBD_LARS1"/>
    <property type="match status" value="1"/>
</dbReference>
<dbReference type="Pfam" id="PF00133">
    <property type="entry name" value="tRNA-synt_1"/>
    <property type="match status" value="2"/>
</dbReference>
<dbReference type="SUPFAM" id="SSF47323">
    <property type="entry name" value="Anticodon-binding domain of a subclass of class I aminoacyl-tRNA synthetases"/>
    <property type="match status" value="1"/>
</dbReference>
<dbReference type="SUPFAM" id="SSF52374">
    <property type="entry name" value="Nucleotidylyl transferase"/>
    <property type="match status" value="1"/>
</dbReference>
<dbReference type="SUPFAM" id="SSF50677">
    <property type="entry name" value="ValRS/IleRS/LeuRS editing domain"/>
    <property type="match status" value="1"/>
</dbReference>
<dbReference type="PROSITE" id="PS00178">
    <property type="entry name" value="AA_TRNA_LIGASE_I"/>
    <property type="match status" value="1"/>
</dbReference>
<reference key="1">
    <citation type="journal article" date="1989" name="Mol. Cell. Biol.">
        <title>Regulation of the nuclear genes encoding the cytoplasmic and mitochondrial leucyl-tRNA synthetases of Neurospora crassa.</title>
        <authorList>
            <person name="Chow C.M."/>
            <person name="RajBhandary U.L."/>
        </authorList>
    </citation>
    <scope>NUCLEOTIDE SEQUENCE [GENOMIC DNA]</scope>
</reference>
<reference key="2">
    <citation type="journal article" date="2003" name="Nucleic Acids Res.">
        <title>What's in the genome of a filamentous fungus? Analysis of the Neurospora genome sequence.</title>
        <authorList>
            <person name="Mannhaupt G."/>
            <person name="Montrone C."/>
            <person name="Haase D."/>
            <person name="Mewes H.-W."/>
            <person name="Aign V."/>
            <person name="Hoheisel J.D."/>
            <person name="Fartmann B."/>
            <person name="Nyakatura G."/>
            <person name="Kempken F."/>
            <person name="Maier J."/>
            <person name="Schulte U."/>
        </authorList>
    </citation>
    <scope>NUCLEOTIDE SEQUENCE [LARGE SCALE GENOMIC DNA]</scope>
    <source>
        <strain>ATCC 24698 / 74-OR23-1A / CBS 708.71 / DSM 1257 / FGSC 987</strain>
    </source>
</reference>
<reference key="3">
    <citation type="journal article" date="2003" name="Nature">
        <title>The genome sequence of the filamentous fungus Neurospora crassa.</title>
        <authorList>
            <person name="Galagan J.E."/>
            <person name="Calvo S.E."/>
            <person name="Borkovich K.A."/>
            <person name="Selker E.U."/>
            <person name="Read N.D."/>
            <person name="Jaffe D.B."/>
            <person name="FitzHugh W."/>
            <person name="Ma L.-J."/>
            <person name="Smirnov S."/>
            <person name="Purcell S."/>
            <person name="Rehman B."/>
            <person name="Elkins T."/>
            <person name="Engels R."/>
            <person name="Wang S."/>
            <person name="Nielsen C.B."/>
            <person name="Butler J."/>
            <person name="Endrizzi M."/>
            <person name="Qui D."/>
            <person name="Ianakiev P."/>
            <person name="Bell-Pedersen D."/>
            <person name="Nelson M.A."/>
            <person name="Werner-Washburne M."/>
            <person name="Selitrennikoff C.P."/>
            <person name="Kinsey J.A."/>
            <person name="Braun E.L."/>
            <person name="Zelter A."/>
            <person name="Schulte U."/>
            <person name="Kothe G.O."/>
            <person name="Jedd G."/>
            <person name="Mewes H.-W."/>
            <person name="Staben C."/>
            <person name="Marcotte E."/>
            <person name="Greenberg D."/>
            <person name="Roy A."/>
            <person name="Foley K."/>
            <person name="Naylor J."/>
            <person name="Stange-Thomann N."/>
            <person name="Barrett R."/>
            <person name="Gnerre S."/>
            <person name="Kamal M."/>
            <person name="Kamvysselis M."/>
            <person name="Mauceli E.W."/>
            <person name="Bielke C."/>
            <person name="Rudd S."/>
            <person name="Frishman D."/>
            <person name="Krystofova S."/>
            <person name="Rasmussen C."/>
            <person name="Metzenberg R.L."/>
            <person name="Perkins D.D."/>
            <person name="Kroken S."/>
            <person name="Cogoni C."/>
            <person name="Macino G."/>
            <person name="Catcheside D.E.A."/>
            <person name="Li W."/>
            <person name="Pratt R.J."/>
            <person name="Osmani S.A."/>
            <person name="DeSouza C.P.C."/>
            <person name="Glass N.L."/>
            <person name="Orbach M.J."/>
            <person name="Berglund J.A."/>
            <person name="Voelker R."/>
            <person name="Yarden O."/>
            <person name="Plamann M."/>
            <person name="Seiler S."/>
            <person name="Dunlap J.C."/>
            <person name="Radford A."/>
            <person name="Aramayo R."/>
            <person name="Natvig D.O."/>
            <person name="Alex L.A."/>
            <person name="Mannhaupt G."/>
            <person name="Ebbole D.J."/>
            <person name="Freitag M."/>
            <person name="Paulsen I."/>
            <person name="Sachs M.S."/>
            <person name="Lander E.S."/>
            <person name="Nusbaum C."/>
            <person name="Birren B.W."/>
        </authorList>
    </citation>
    <scope>NUCLEOTIDE SEQUENCE [LARGE SCALE GENOMIC DNA]</scope>
    <source>
        <strain>ATCC 24698 / 74-OR23-1A / CBS 708.71 / DSM 1257 / FGSC 987</strain>
    </source>
</reference>
<reference key="4">
    <citation type="journal article" date="1988" name="Genetics">
        <title>Cytoplasmic leucyl-tRNA synthetase of Neurospora crassa is not specified by the leu-5 locus.</title>
        <authorList>
            <person name="Benarous R."/>
            <person name="Chow C.M."/>
            <person name="RajBhandary U.L."/>
        </authorList>
    </citation>
    <scope>NUCLEOTIDE SEQUENCE [GENOMIC DNA] OF 1-116</scope>
</reference>
<name>SYLC_NEUCR</name>